<feature type="chain" id="PRO_0000180730" description="Glucose-6-phosphate isomerase">
    <location>
        <begin position="1"/>
        <end position="443"/>
    </location>
</feature>
<feature type="active site" description="Proton donor" evidence="1">
    <location>
        <position position="285"/>
    </location>
</feature>
<feature type="active site" evidence="1">
    <location>
        <position position="306"/>
    </location>
</feature>
<feature type="active site" evidence="1">
    <location>
        <position position="420"/>
    </location>
</feature>
<organism>
    <name type="scientific">Staphylococcus aureus (strain MW2)</name>
    <dbReference type="NCBI Taxonomy" id="196620"/>
    <lineage>
        <taxon>Bacteria</taxon>
        <taxon>Bacillati</taxon>
        <taxon>Bacillota</taxon>
        <taxon>Bacilli</taxon>
        <taxon>Bacillales</taxon>
        <taxon>Staphylococcaceae</taxon>
        <taxon>Staphylococcus</taxon>
    </lineage>
</organism>
<gene>
    <name evidence="1" type="primary">pgi</name>
    <name type="ordered locus">MW0844</name>
</gene>
<protein>
    <recommendedName>
        <fullName evidence="1">Glucose-6-phosphate isomerase</fullName>
        <shortName evidence="1">GPI</shortName>
        <ecNumber evidence="1">5.3.1.9</ecNumber>
    </recommendedName>
    <alternativeName>
        <fullName evidence="1">Phosphoglucose isomerase</fullName>
        <shortName evidence="1">PGI</shortName>
    </alternativeName>
    <alternativeName>
        <fullName evidence="1">Phosphohexose isomerase</fullName>
        <shortName evidence="1">PHI</shortName>
    </alternativeName>
</protein>
<name>G6PI_STAAW</name>
<sequence>MTHIQLDFSKTLEFFGEHELKQQQEIVKSIHKTIHEGTGAGSDFLGWVDLPVDYDKEEFSRIVEASKRIKENSDVLVVIGIGGSYLGARAAIEMLTSSFRNSNEYPEIVFVGNHLSSTYTKELVDYLADKDFSVNVISKSGTTTEPAVAFRLFKQLVEERYGKEEAQKRIFATTDKEKGALKQLATNEGYETFIVPDDVGGRYSVLTAVGLLPIATAGINIEAMMIGAAKAREELSSDKLEENIAYQYATIRNILYAKGYTTEMLINYEPSMQYFNEWWKQLFGESEGKDFKGIYPSSANYTTDLHSLGQYVQEGRRFLFETVVKVNHPKYDITIEKDSDDLDGLNYLAGKTIDEVNTKAFEGTLLAHTDGGVPNMVVNIPQLDEETFGYVVYFFELACAMSGYQLGVNPFNQPGVEAYKQNMFALLGKPGFEDLKKELEERL</sequence>
<dbReference type="EC" id="5.3.1.9" evidence="1"/>
<dbReference type="EMBL" id="BA000033">
    <property type="protein sequence ID" value="BAB94709.1"/>
    <property type="molecule type" value="Genomic_DNA"/>
</dbReference>
<dbReference type="RefSeq" id="WP_000148855.1">
    <property type="nucleotide sequence ID" value="NC_003923.1"/>
</dbReference>
<dbReference type="SMR" id="Q8NXF1"/>
<dbReference type="KEGG" id="sam:MW0844"/>
<dbReference type="HOGENOM" id="CLU_037303_0_1_9"/>
<dbReference type="UniPathway" id="UPA00109">
    <property type="reaction ID" value="UER00181"/>
</dbReference>
<dbReference type="UniPathway" id="UPA00138"/>
<dbReference type="GO" id="GO:0005829">
    <property type="term" value="C:cytosol"/>
    <property type="evidence" value="ECO:0007669"/>
    <property type="project" value="TreeGrafter"/>
</dbReference>
<dbReference type="GO" id="GO:0097367">
    <property type="term" value="F:carbohydrate derivative binding"/>
    <property type="evidence" value="ECO:0007669"/>
    <property type="project" value="InterPro"/>
</dbReference>
<dbReference type="GO" id="GO:0004347">
    <property type="term" value="F:glucose-6-phosphate isomerase activity"/>
    <property type="evidence" value="ECO:0007669"/>
    <property type="project" value="UniProtKB-UniRule"/>
</dbReference>
<dbReference type="GO" id="GO:0048029">
    <property type="term" value="F:monosaccharide binding"/>
    <property type="evidence" value="ECO:0007669"/>
    <property type="project" value="TreeGrafter"/>
</dbReference>
<dbReference type="GO" id="GO:0006094">
    <property type="term" value="P:gluconeogenesis"/>
    <property type="evidence" value="ECO:0007669"/>
    <property type="project" value="UniProtKB-UniRule"/>
</dbReference>
<dbReference type="GO" id="GO:0051156">
    <property type="term" value="P:glucose 6-phosphate metabolic process"/>
    <property type="evidence" value="ECO:0007669"/>
    <property type="project" value="TreeGrafter"/>
</dbReference>
<dbReference type="GO" id="GO:0006096">
    <property type="term" value="P:glycolytic process"/>
    <property type="evidence" value="ECO:0007669"/>
    <property type="project" value="UniProtKB-UniRule"/>
</dbReference>
<dbReference type="CDD" id="cd05015">
    <property type="entry name" value="SIS_PGI_1"/>
    <property type="match status" value="1"/>
</dbReference>
<dbReference type="CDD" id="cd05016">
    <property type="entry name" value="SIS_PGI_2"/>
    <property type="match status" value="1"/>
</dbReference>
<dbReference type="FunFam" id="3.40.50.10490:FF:000015">
    <property type="entry name" value="Glucose-6-phosphate isomerase"/>
    <property type="match status" value="1"/>
</dbReference>
<dbReference type="FunFam" id="3.40.50.10490:FF:000016">
    <property type="entry name" value="Glucose-6-phosphate isomerase"/>
    <property type="match status" value="1"/>
</dbReference>
<dbReference type="Gene3D" id="3.40.50.10490">
    <property type="entry name" value="Glucose-6-phosphate isomerase like protein, domain 1"/>
    <property type="match status" value="3"/>
</dbReference>
<dbReference type="HAMAP" id="MF_00473">
    <property type="entry name" value="G6P_isomerase"/>
    <property type="match status" value="1"/>
</dbReference>
<dbReference type="InterPro" id="IPR001672">
    <property type="entry name" value="G6P_Isomerase"/>
</dbReference>
<dbReference type="InterPro" id="IPR018189">
    <property type="entry name" value="Phosphoglucose_isomerase_CS"/>
</dbReference>
<dbReference type="InterPro" id="IPR046348">
    <property type="entry name" value="SIS_dom_sf"/>
</dbReference>
<dbReference type="InterPro" id="IPR035476">
    <property type="entry name" value="SIS_PGI_1"/>
</dbReference>
<dbReference type="InterPro" id="IPR035482">
    <property type="entry name" value="SIS_PGI_2"/>
</dbReference>
<dbReference type="NCBIfam" id="NF010697">
    <property type="entry name" value="PRK14097.1"/>
    <property type="match status" value="1"/>
</dbReference>
<dbReference type="PANTHER" id="PTHR11469">
    <property type="entry name" value="GLUCOSE-6-PHOSPHATE ISOMERASE"/>
    <property type="match status" value="1"/>
</dbReference>
<dbReference type="PANTHER" id="PTHR11469:SF1">
    <property type="entry name" value="GLUCOSE-6-PHOSPHATE ISOMERASE"/>
    <property type="match status" value="1"/>
</dbReference>
<dbReference type="Pfam" id="PF00342">
    <property type="entry name" value="PGI"/>
    <property type="match status" value="1"/>
</dbReference>
<dbReference type="PRINTS" id="PR00662">
    <property type="entry name" value="G6PISOMERASE"/>
</dbReference>
<dbReference type="SUPFAM" id="SSF53697">
    <property type="entry name" value="SIS domain"/>
    <property type="match status" value="1"/>
</dbReference>
<dbReference type="PROSITE" id="PS00765">
    <property type="entry name" value="P_GLUCOSE_ISOMERASE_1"/>
    <property type="match status" value="1"/>
</dbReference>
<dbReference type="PROSITE" id="PS00174">
    <property type="entry name" value="P_GLUCOSE_ISOMERASE_2"/>
    <property type="match status" value="1"/>
</dbReference>
<dbReference type="PROSITE" id="PS51463">
    <property type="entry name" value="P_GLUCOSE_ISOMERASE_3"/>
    <property type="match status" value="1"/>
</dbReference>
<comment type="function">
    <text evidence="1">Catalyzes the reversible isomerization of glucose-6-phosphate to fructose-6-phosphate.</text>
</comment>
<comment type="catalytic activity">
    <reaction evidence="1">
        <text>alpha-D-glucose 6-phosphate = beta-D-fructose 6-phosphate</text>
        <dbReference type="Rhea" id="RHEA:11816"/>
        <dbReference type="ChEBI" id="CHEBI:57634"/>
        <dbReference type="ChEBI" id="CHEBI:58225"/>
        <dbReference type="EC" id="5.3.1.9"/>
    </reaction>
</comment>
<comment type="pathway">
    <text evidence="1">Carbohydrate biosynthesis; gluconeogenesis.</text>
</comment>
<comment type="pathway">
    <text evidence="1">Carbohydrate degradation; glycolysis; D-glyceraldehyde 3-phosphate and glycerone phosphate from D-glucose: step 2/4.</text>
</comment>
<comment type="subcellular location">
    <subcellularLocation>
        <location evidence="1">Cytoplasm</location>
    </subcellularLocation>
</comment>
<comment type="similarity">
    <text evidence="1">Belongs to the GPI family.</text>
</comment>
<reference key="1">
    <citation type="journal article" date="2002" name="Lancet">
        <title>Genome and virulence determinants of high virulence community-acquired MRSA.</title>
        <authorList>
            <person name="Baba T."/>
            <person name="Takeuchi F."/>
            <person name="Kuroda M."/>
            <person name="Yuzawa H."/>
            <person name="Aoki K."/>
            <person name="Oguchi A."/>
            <person name="Nagai Y."/>
            <person name="Iwama N."/>
            <person name="Asano K."/>
            <person name="Naimi T."/>
            <person name="Kuroda H."/>
            <person name="Cui L."/>
            <person name="Yamamoto K."/>
            <person name="Hiramatsu K."/>
        </authorList>
    </citation>
    <scope>NUCLEOTIDE SEQUENCE [LARGE SCALE GENOMIC DNA]</scope>
    <source>
        <strain>MW2</strain>
    </source>
</reference>
<accession>Q8NXF1</accession>
<proteinExistence type="inferred from homology"/>
<keyword id="KW-0963">Cytoplasm</keyword>
<keyword id="KW-0312">Gluconeogenesis</keyword>
<keyword id="KW-0324">Glycolysis</keyword>
<keyword id="KW-0413">Isomerase</keyword>
<evidence type="ECO:0000255" key="1">
    <source>
        <dbReference type="HAMAP-Rule" id="MF_00473"/>
    </source>
</evidence>